<organism>
    <name type="scientific">Streptomyces coelicolor (strain ATCC BAA-471 / A3(2) / M145)</name>
    <dbReference type="NCBI Taxonomy" id="100226"/>
    <lineage>
        <taxon>Bacteria</taxon>
        <taxon>Bacillati</taxon>
        <taxon>Actinomycetota</taxon>
        <taxon>Actinomycetes</taxon>
        <taxon>Kitasatosporales</taxon>
        <taxon>Streptomycetaceae</taxon>
        <taxon>Streptomyces</taxon>
        <taxon>Streptomyces albidoflavus group</taxon>
    </lineage>
</organism>
<feature type="chain" id="PRO_0000062881" description="Octanoyltransferase">
    <location>
        <begin position="1"/>
        <end position="265"/>
    </location>
</feature>
<feature type="domain" description="BPL/LPL catalytic" evidence="2">
    <location>
        <begin position="35"/>
        <end position="254"/>
    </location>
</feature>
<feature type="active site" description="Acyl-thioester intermediate" evidence="1">
    <location>
        <position position="215"/>
    </location>
</feature>
<feature type="binding site" evidence="1">
    <location>
        <begin position="73"/>
        <end position="80"/>
    </location>
    <ligand>
        <name>substrate</name>
    </ligand>
</feature>
<feature type="binding site" evidence="1">
    <location>
        <begin position="184"/>
        <end position="186"/>
    </location>
    <ligand>
        <name>substrate</name>
    </ligand>
</feature>
<feature type="binding site" evidence="1">
    <location>
        <begin position="197"/>
        <end position="199"/>
    </location>
    <ligand>
        <name>substrate</name>
    </ligand>
</feature>
<feature type="site" description="Lowers pKa of active site Cys" evidence="1">
    <location>
        <position position="181"/>
    </location>
</feature>
<accession>Q8CK04</accession>
<name>LIPB_STRCO</name>
<sequence>MSELRFVRMGFGADRVEYQEAWDEQRRVHAARFVDEVPDTVLLLEHPPVYTAGRRTEDSERPLDGTPVIDVDRGGKITWHGPGQLVGYPIQKLPRPVDVVAHVRRLEEALIRTCAEFGLETSRVEGRSGVWVLGDPVEQRPVLGGLSLDFDPRLSDDEFDPRLNGPEYAPSNAGQRREDRKIAAIGIRVAKGVTMHGFALNVNPDNKWFDKIIPCGIRDAGVASLANELGRDVTIEEVLPVAERHLRDVLENAELKPRVIEKTPA</sequence>
<comment type="function">
    <text evidence="1">Catalyzes the transfer of endogenously produced octanoic acid from octanoyl-acyl-carrier-protein onto the lipoyl domains of lipoate-dependent enzymes. Lipoyl-ACP can also act as a substrate although octanoyl-ACP is likely to be the physiological substrate.</text>
</comment>
<comment type="catalytic activity">
    <reaction evidence="1">
        <text>octanoyl-[ACP] + L-lysyl-[protein] = N(6)-octanoyl-L-lysyl-[protein] + holo-[ACP] + H(+)</text>
        <dbReference type="Rhea" id="RHEA:17665"/>
        <dbReference type="Rhea" id="RHEA-COMP:9636"/>
        <dbReference type="Rhea" id="RHEA-COMP:9685"/>
        <dbReference type="Rhea" id="RHEA-COMP:9752"/>
        <dbReference type="Rhea" id="RHEA-COMP:9928"/>
        <dbReference type="ChEBI" id="CHEBI:15378"/>
        <dbReference type="ChEBI" id="CHEBI:29969"/>
        <dbReference type="ChEBI" id="CHEBI:64479"/>
        <dbReference type="ChEBI" id="CHEBI:78463"/>
        <dbReference type="ChEBI" id="CHEBI:78809"/>
        <dbReference type="EC" id="2.3.1.181"/>
    </reaction>
</comment>
<comment type="pathway">
    <text evidence="1">Protein modification; protein lipoylation via endogenous pathway; protein N(6)-(lipoyl)lysine from octanoyl-[acyl-carrier-protein]: step 1/2.</text>
</comment>
<comment type="subcellular location">
    <subcellularLocation>
        <location evidence="1">Cytoplasm</location>
    </subcellularLocation>
</comment>
<comment type="miscellaneous">
    <text evidence="1">In the reaction, the free carboxyl group of octanoic acid is attached via an amide linkage to the epsilon-amino group of a specific lysine residue of lipoyl domains of lipoate-dependent enzymes.</text>
</comment>
<comment type="similarity">
    <text evidence="1">Belongs to the LipB family.</text>
</comment>
<reference key="1">
    <citation type="journal article" date="2002" name="Nature">
        <title>Complete genome sequence of the model actinomycete Streptomyces coelicolor A3(2).</title>
        <authorList>
            <person name="Bentley S.D."/>
            <person name="Chater K.F."/>
            <person name="Cerdeno-Tarraga A.-M."/>
            <person name="Challis G.L."/>
            <person name="Thomson N.R."/>
            <person name="James K.D."/>
            <person name="Harris D.E."/>
            <person name="Quail M.A."/>
            <person name="Kieser H."/>
            <person name="Harper D."/>
            <person name="Bateman A."/>
            <person name="Brown S."/>
            <person name="Chandra G."/>
            <person name="Chen C.W."/>
            <person name="Collins M."/>
            <person name="Cronin A."/>
            <person name="Fraser A."/>
            <person name="Goble A."/>
            <person name="Hidalgo J."/>
            <person name="Hornsby T."/>
            <person name="Howarth S."/>
            <person name="Huang C.-H."/>
            <person name="Kieser T."/>
            <person name="Larke L."/>
            <person name="Murphy L.D."/>
            <person name="Oliver K."/>
            <person name="O'Neil S."/>
            <person name="Rabbinowitsch E."/>
            <person name="Rajandream M.A."/>
            <person name="Rutherford K.M."/>
            <person name="Rutter S."/>
            <person name="Seeger K."/>
            <person name="Saunders D."/>
            <person name="Sharp S."/>
            <person name="Squares R."/>
            <person name="Squares S."/>
            <person name="Taylor K."/>
            <person name="Warren T."/>
            <person name="Wietzorrek A."/>
            <person name="Woodward J.R."/>
            <person name="Barrell B.G."/>
            <person name="Parkhill J."/>
            <person name="Hopwood D.A."/>
        </authorList>
    </citation>
    <scope>NUCLEOTIDE SEQUENCE [LARGE SCALE GENOMIC DNA]</scope>
    <source>
        <strain>ATCC BAA-471 / A3(2) / M145</strain>
    </source>
</reference>
<evidence type="ECO:0000255" key="1">
    <source>
        <dbReference type="HAMAP-Rule" id="MF_00013"/>
    </source>
</evidence>
<evidence type="ECO:0000255" key="2">
    <source>
        <dbReference type="PROSITE-ProRule" id="PRU01067"/>
    </source>
</evidence>
<proteinExistence type="inferred from homology"/>
<dbReference type="EC" id="2.3.1.181" evidence="1"/>
<dbReference type="EMBL" id="AL939111">
    <property type="protein sequence ID" value="CAD55297.1"/>
    <property type="molecule type" value="Genomic_DNA"/>
</dbReference>
<dbReference type="PIR" id="T35309">
    <property type="entry name" value="T35309"/>
</dbReference>
<dbReference type="RefSeq" id="NP_733562.1">
    <property type="nucleotide sequence ID" value="NC_003888.3"/>
</dbReference>
<dbReference type="RefSeq" id="WP_003976622.1">
    <property type="nucleotide sequence ID" value="NZ_VNID01000001.1"/>
</dbReference>
<dbReference type="SMR" id="Q8CK04"/>
<dbReference type="FunCoup" id="Q8CK04">
    <property type="interactions" value="331"/>
</dbReference>
<dbReference type="STRING" id="100226.gene:17759790"/>
<dbReference type="PaxDb" id="100226-SCO2193"/>
<dbReference type="KEGG" id="sco:SCO2193"/>
<dbReference type="PATRIC" id="fig|100226.15.peg.2230"/>
<dbReference type="eggNOG" id="COG0321">
    <property type="taxonomic scope" value="Bacteria"/>
</dbReference>
<dbReference type="HOGENOM" id="CLU_035168_2_1_11"/>
<dbReference type="InParanoid" id="Q8CK04"/>
<dbReference type="OrthoDB" id="9787061at2"/>
<dbReference type="PhylomeDB" id="Q8CK04"/>
<dbReference type="UniPathway" id="UPA00538">
    <property type="reaction ID" value="UER00592"/>
</dbReference>
<dbReference type="Proteomes" id="UP000001973">
    <property type="component" value="Chromosome"/>
</dbReference>
<dbReference type="GO" id="GO:0005737">
    <property type="term" value="C:cytoplasm"/>
    <property type="evidence" value="ECO:0007669"/>
    <property type="project" value="UniProtKB-SubCell"/>
</dbReference>
<dbReference type="GO" id="GO:0033819">
    <property type="term" value="F:lipoyl(octanoyl) transferase activity"/>
    <property type="evidence" value="ECO:0000318"/>
    <property type="project" value="GO_Central"/>
</dbReference>
<dbReference type="GO" id="GO:0036211">
    <property type="term" value="P:protein modification process"/>
    <property type="evidence" value="ECO:0007669"/>
    <property type="project" value="InterPro"/>
</dbReference>
<dbReference type="CDD" id="cd16444">
    <property type="entry name" value="LipB"/>
    <property type="match status" value="1"/>
</dbReference>
<dbReference type="Gene3D" id="3.30.930.10">
    <property type="entry name" value="Bira Bifunctional Protein, Domain 2"/>
    <property type="match status" value="1"/>
</dbReference>
<dbReference type="HAMAP" id="MF_00013">
    <property type="entry name" value="LipB"/>
    <property type="match status" value="1"/>
</dbReference>
<dbReference type="InterPro" id="IPR045864">
    <property type="entry name" value="aa-tRNA-synth_II/BPL/LPL"/>
</dbReference>
<dbReference type="InterPro" id="IPR004143">
    <property type="entry name" value="BPL_LPL_catalytic"/>
</dbReference>
<dbReference type="InterPro" id="IPR000544">
    <property type="entry name" value="Octanoyltransferase"/>
</dbReference>
<dbReference type="InterPro" id="IPR020605">
    <property type="entry name" value="Octanoyltransferase_CS"/>
</dbReference>
<dbReference type="NCBIfam" id="NF010925">
    <property type="entry name" value="PRK14345.1"/>
    <property type="match status" value="1"/>
</dbReference>
<dbReference type="PANTHER" id="PTHR10993:SF7">
    <property type="entry name" value="LIPOYLTRANSFERASE 2, MITOCHONDRIAL-RELATED"/>
    <property type="match status" value="1"/>
</dbReference>
<dbReference type="PANTHER" id="PTHR10993">
    <property type="entry name" value="OCTANOYLTRANSFERASE"/>
    <property type="match status" value="1"/>
</dbReference>
<dbReference type="Pfam" id="PF21948">
    <property type="entry name" value="LplA-B_cat"/>
    <property type="match status" value="1"/>
</dbReference>
<dbReference type="PIRSF" id="PIRSF016262">
    <property type="entry name" value="LPLase"/>
    <property type="match status" value="1"/>
</dbReference>
<dbReference type="SUPFAM" id="SSF55681">
    <property type="entry name" value="Class II aaRS and biotin synthetases"/>
    <property type="match status" value="1"/>
</dbReference>
<dbReference type="PROSITE" id="PS51733">
    <property type="entry name" value="BPL_LPL_CATALYTIC"/>
    <property type="match status" value="1"/>
</dbReference>
<dbReference type="PROSITE" id="PS01313">
    <property type="entry name" value="LIPB"/>
    <property type="match status" value="1"/>
</dbReference>
<gene>
    <name evidence="1" type="primary">lipB</name>
    <name type="ordered locus">SCO2193</name>
    <name type="ORF">SC5F7.08</name>
</gene>
<protein>
    <recommendedName>
        <fullName evidence="1">Octanoyltransferase</fullName>
        <ecNumber evidence="1">2.3.1.181</ecNumber>
    </recommendedName>
    <alternativeName>
        <fullName evidence="1">Lipoate-protein ligase B</fullName>
    </alternativeName>
    <alternativeName>
        <fullName evidence="1">Lipoyl/octanoyl transferase</fullName>
    </alternativeName>
    <alternativeName>
        <fullName evidence="1">Octanoyl-[acyl-carrier-protein]-protein N-octanoyltransferase</fullName>
    </alternativeName>
</protein>
<keyword id="KW-0012">Acyltransferase</keyword>
<keyword id="KW-0963">Cytoplasm</keyword>
<keyword id="KW-1185">Reference proteome</keyword>
<keyword id="KW-0808">Transferase</keyword>